<gene>
    <name type="primary">ARP4</name>
    <name type="ordered locus">KLLA0D02288g</name>
</gene>
<dbReference type="EMBL" id="CR382124">
    <property type="protein sequence ID" value="CAH00266.1"/>
    <property type="molecule type" value="Genomic_DNA"/>
</dbReference>
<dbReference type="RefSeq" id="XP_453170.1">
    <property type="nucleotide sequence ID" value="XM_453170.1"/>
</dbReference>
<dbReference type="SMR" id="Q6CSB9"/>
<dbReference type="FunCoup" id="Q6CSB9">
    <property type="interactions" value="411"/>
</dbReference>
<dbReference type="STRING" id="284590.Q6CSB9"/>
<dbReference type="PaxDb" id="284590-Q6CSB9"/>
<dbReference type="KEGG" id="kla:KLLA0_D02288g"/>
<dbReference type="eggNOG" id="KOG0679">
    <property type="taxonomic scope" value="Eukaryota"/>
</dbReference>
<dbReference type="HOGENOM" id="CLU_027965_6_2_1"/>
<dbReference type="InParanoid" id="Q6CSB9"/>
<dbReference type="OMA" id="MWLSRQE"/>
<dbReference type="Proteomes" id="UP000000598">
    <property type="component" value="Chromosome D"/>
</dbReference>
<dbReference type="GO" id="GO:0005634">
    <property type="term" value="C:nucleus"/>
    <property type="evidence" value="ECO:0007669"/>
    <property type="project" value="UniProtKB-SubCell"/>
</dbReference>
<dbReference type="GO" id="GO:0006325">
    <property type="term" value="P:chromatin organization"/>
    <property type="evidence" value="ECO:0007669"/>
    <property type="project" value="UniProtKB-KW"/>
</dbReference>
<dbReference type="GO" id="GO:0006281">
    <property type="term" value="P:DNA repair"/>
    <property type="evidence" value="ECO:0007669"/>
    <property type="project" value="UniProtKB-KW"/>
</dbReference>
<dbReference type="FunFam" id="3.30.420.40:FF:000203">
    <property type="entry name" value="Actin-related protein 4"/>
    <property type="match status" value="1"/>
</dbReference>
<dbReference type="FunFam" id="3.30.420.40:FF:000289">
    <property type="entry name" value="Actin-related protein 4"/>
    <property type="match status" value="1"/>
</dbReference>
<dbReference type="FunFam" id="3.30.420.40:FF:000058">
    <property type="entry name" value="Putative actin-related protein 5"/>
    <property type="match status" value="1"/>
</dbReference>
<dbReference type="Gene3D" id="3.30.420.40">
    <property type="match status" value="3"/>
</dbReference>
<dbReference type="Gene3D" id="3.90.640.10">
    <property type="entry name" value="Actin, Chain A, domain 4"/>
    <property type="match status" value="1"/>
</dbReference>
<dbReference type="InterPro" id="IPR004000">
    <property type="entry name" value="Actin"/>
</dbReference>
<dbReference type="InterPro" id="IPR043129">
    <property type="entry name" value="ATPase_NBD"/>
</dbReference>
<dbReference type="InterPro" id="IPR018181">
    <property type="entry name" value="Heat_shock_70_CS"/>
</dbReference>
<dbReference type="PANTHER" id="PTHR11937">
    <property type="entry name" value="ACTIN"/>
    <property type="match status" value="1"/>
</dbReference>
<dbReference type="Pfam" id="PF00022">
    <property type="entry name" value="Actin"/>
    <property type="match status" value="2"/>
</dbReference>
<dbReference type="SMART" id="SM00268">
    <property type="entry name" value="ACTIN"/>
    <property type="match status" value="1"/>
</dbReference>
<dbReference type="SUPFAM" id="SSF53067">
    <property type="entry name" value="Actin-like ATPase domain"/>
    <property type="match status" value="2"/>
</dbReference>
<evidence type="ECO:0000250" key="1"/>
<evidence type="ECO:0000256" key="2">
    <source>
        <dbReference type="SAM" id="MobiDB-lite"/>
    </source>
</evidence>
<evidence type="ECO:0000305" key="3"/>
<proteinExistence type="inferred from homology"/>
<sequence>MSNPALQVYGGDEINAIVIDPGSFVTNIGYSGTDCPQSIMPSSYGNVETDGDTKRIFNEQPLLFPRAGMEIKPIVENSTIVDWDRAQEQWEYALNTDLKFESNKGTPVLLTEPIWNSEASRKKSLEILLESMEFEACYLAANSSAVSFAMGRPTCLVVDIGHDVSTVSPVIDGMTLSKSSTRNYVAGKYLNHLIAKNLKPREIVPIFQVLKKKPDFVKRTLSFDVNESVINFANERQFFQEFKETLLHIAPKSLSSFKDELATQTKRSLEAPWGEELIFDADTRYSFAEQLFRPVKEDFPEGWPASTDGIVKTWHNDYVPLKRTKPGTSTNTKEKENTAESTPVPASTEQEAVDSPSQEPNENGKRPVENKEDSSNNEQNSNEIKNEDANSNESSAKATVPSNGIQAKGEDEVAGIVDLINKSMMEADVDLRATLAHNVVLTGGTSKIPGLSDRIMHELNKSLPALKFRMLSSGHLRERQYQGWLGGSILASLGTFHQLWVGREEYEEVGPERLLKDRFR</sequence>
<name>ARP4_KLULA</name>
<accession>Q6CSB9</accession>
<organism>
    <name type="scientific">Kluyveromyces lactis (strain ATCC 8585 / CBS 2359 / DSM 70799 / NBRC 1267 / NRRL Y-1140 / WM37)</name>
    <name type="common">Yeast</name>
    <name type="synonym">Candida sphaerica</name>
    <dbReference type="NCBI Taxonomy" id="284590"/>
    <lineage>
        <taxon>Eukaryota</taxon>
        <taxon>Fungi</taxon>
        <taxon>Dikarya</taxon>
        <taxon>Ascomycota</taxon>
        <taxon>Saccharomycotina</taxon>
        <taxon>Saccharomycetes</taxon>
        <taxon>Saccharomycetales</taxon>
        <taxon>Saccharomycetaceae</taxon>
        <taxon>Kluyveromyces</taxon>
    </lineage>
</organism>
<comment type="function">
    <text evidence="1">Chromatin interaction component of the NuA4 histone acetyltransferase complex which is involved in transcriptional activation of selected genes principally by acetylation of nucleosomal histone H4 and H2A. The NuA4 complex is also involved in DNA repair. Is required for NuA4 complex integrity. Component of the SWR1 complex which mediates the ATP-dependent exchange of histone H2A for the H2A variant HZT1 leading to transcriptional regulation of selected genes by chromatin remodeling. Component of the INO80 complex which remodels chromatin by shifting nucleosomes and is involved in DNA repair (By similarity).</text>
</comment>
<comment type="subunit">
    <text evidence="1">Component of the NuA4 histone acetyltransferase complex, of the INO80 chromatin remodeling complex, and of the SWR1 chromatin remodeling complex.</text>
</comment>
<comment type="subcellular location">
    <subcellularLocation>
        <location evidence="1">Nucleus</location>
    </subcellularLocation>
</comment>
<comment type="similarity">
    <text evidence="3">Belongs to the actin family. ARP4 subfamily.</text>
</comment>
<reference key="1">
    <citation type="journal article" date="2004" name="Nature">
        <title>Genome evolution in yeasts.</title>
        <authorList>
            <person name="Dujon B."/>
            <person name="Sherman D."/>
            <person name="Fischer G."/>
            <person name="Durrens P."/>
            <person name="Casaregola S."/>
            <person name="Lafontaine I."/>
            <person name="de Montigny J."/>
            <person name="Marck C."/>
            <person name="Neuveglise C."/>
            <person name="Talla E."/>
            <person name="Goffard N."/>
            <person name="Frangeul L."/>
            <person name="Aigle M."/>
            <person name="Anthouard V."/>
            <person name="Babour A."/>
            <person name="Barbe V."/>
            <person name="Barnay S."/>
            <person name="Blanchin S."/>
            <person name="Beckerich J.-M."/>
            <person name="Beyne E."/>
            <person name="Bleykasten C."/>
            <person name="Boisrame A."/>
            <person name="Boyer J."/>
            <person name="Cattolico L."/>
            <person name="Confanioleri F."/>
            <person name="de Daruvar A."/>
            <person name="Despons L."/>
            <person name="Fabre E."/>
            <person name="Fairhead C."/>
            <person name="Ferry-Dumazet H."/>
            <person name="Groppi A."/>
            <person name="Hantraye F."/>
            <person name="Hennequin C."/>
            <person name="Jauniaux N."/>
            <person name="Joyet P."/>
            <person name="Kachouri R."/>
            <person name="Kerrest A."/>
            <person name="Koszul R."/>
            <person name="Lemaire M."/>
            <person name="Lesur I."/>
            <person name="Ma L."/>
            <person name="Muller H."/>
            <person name="Nicaud J.-M."/>
            <person name="Nikolski M."/>
            <person name="Oztas S."/>
            <person name="Ozier-Kalogeropoulos O."/>
            <person name="Pellenz S."/>
            <person name="Potier S."/>
            <person name="Richard G.-F."/>
            <person name="Straub M.-L."/>
            <person name="Suleau A."/>
            <person name="Swennen D."/>
            <person name="Tekaia F."/>
            <person name="Wesolowski-Louvel M."/>
            <person name="Westhof E."/>
            <person name="Wirth B."/>
            <person name="Zeniou-Meyer M."/>
            <person name="Zivanovic Y."/>
            <person name="Bolotin-Fukuhara M."/>
            <person name="Thierry A."/>
            <person name="Bouchier C."/>
            <person name="Caudron B."/>
            <person name="Scarpelli C."/>
            <person name="Gaillardin C."/>
            <person name="Weissenbach J."/>
            <person name="Wincker P."/>
            <person name="Souciet J.-L."/>
        </authorList>
    </citation>
    <scope>NUCLEOTIDE SEQUENCE [LARGE SCALE GENOMIC DNA]</scope>
    <source>
        <strain>ATCC 8585 / CBS 2359 / DSM 70799 / NBRC 1267 / NRRL Y-1140 / WM37</strain>
    </source>
</reference>
<keyword id="KW-0010">Activator</keyword>
<keyword id="KW-0156">Chromatin regulator</keyword>
<keyword id="KW-0227">DNA damage</keyword>
<keyword id="KW-0234">DNA repair</keyword>
<keyword id="KW-0539">Nucleus</keyword>
<keyword id="KW-1185">Reference proteome</keyword>
<keyword id="KW-0804">Transcription</keyword>
<keyword id="KW-0805">Transcription regulation</keyword>
<protein>
    <recommendedName>
        <fullName>Actin-related protein 4</fullName>
    </recommendedName>
    <alternativeName>
        <fullName>Actin-like protein ARP4</fullName>
        <shortName>Actin-like protein 4</shortName>
    </alternativeName>
</protein>
<feature type="chain" id="PRO_0000089098" description="Actin-related protein 4">
    <location>
        <begin position="1"/>
        <end position="520"/>
    </location>
</feature>
<feature type="region of interest" description="Disordered" evidence="2">
    <location>
        <begin position="320"/>
        <end position="406"/>
    </location>
</feature>
<feature type="compositionally biased region" description="Polar residues" evidence="2">
    <location>
        <begin position="339"/>
        <end position="361"/>
    </location>
</feature>
<feature type="compositionally biased region" description="Basic and acidic residues" evidence="2">
    <location>
        <begin position="362"/>
        <end position="374"/>
    </location>
</feature>
<feature type="compositionally biased region" description="Polar residues" evidence="2">
    <location>
        <begin position="389"/>
        <end position="405"/>
    </location>
</feature>